<keyword id="KW-1185">Reference proteome</keyword>
<organism>
    <name type="scientific">Homo sapiens</name>
    <name type="common">Human</name>
    <dbReference type="NCBI Taxonomy" id="9606"/>
    <lineage>
        <taxon>Eukaryota</taxon>
        <taxon>Metazoa</taxon>
        <taxon>Chordata</taxon>
        <taxon>Craniata</taxon>
        <taxon>Vertebrata</taxon>
        <taxon>Euteleostomi</taxon>
        <taxon>Mammalia</taxon>
        <taxon>Eutheria</taxon>
        <taxon>Euarchontoglires</taxon>
        <taxon>Primates</taxon>
        <taxon>Haplorrhini</taxon>
        <taxon>Catarrhini</taxon>
        <taxon>Hominidae</taxon>
        <taxon>Homo</taxon>
    </lineage>
</organism>
<comment type="similarity">
    <text evidence="2">Belongs to the UPF0575 family.</text>
</comment>
<reference key="1">
    <citation type="journal article" date="2004" name="Nature">
        <title>The DNA sequence and biology of human chromosome 19.</title>
        <authorList>
            <person name="Grimwood J."/>
            <person name="Gordon L.A."/>
            <person name="Olsen A.S."/>
            <person name="Terry A."/>
            <person name="Schmutz J."/>
            <person name="Lamerdin J.E."/>
            <person name="Hellsten U."/>
            <person name="Goodstein D."/>
            <person name="Couronne O."/>
            <person name="Tran-Gyamfi M."/>
            <person name="Aerts A."/>
            <person name="Altherr M."/>
            <person name="Ashworth L."/>
            <person name="Bajorek E."/>
            <person name="Black S."/>
            <person name="Branscomb E."/>
            <person name="Caenepeel S."/>
            <person name="Carrano A.V."/>
            <person name="Caoile C."/>
            <person name="Chan Y.M."/>
            <person name="Christensen M."/>
            <person name="Cleland C.A."/>
            <person name="Copeland A."/>
            <person name="Dalin E."/>
            <person name="Dehal P."/>
            <person name="Denys M."/>
            <person name="Detter J.C."/>
            <person name="Escobar J."/>
            <person name="Flowers D."/>
            <person name="Fotopulos D."/>
            <person name="Garcia C."/>
            <person name="Georgescu A.M."/>
            <person name="Glavina T."/>
            <person name="Gomez M."/>
            <person name="Gonzales E."/>
            <person name="Groza M."/>
            <person name="Hammon N."/>
            <person name="Hawkins T."/>
            <person name="Haydu L."/>
            <person name="Ho I."/>
            <person name="Huang W."/>
            <person name="Israni S."/>
            <person name="Jett J."/>
            <person name="Kadner K."/>
            <person name="Kimball H."/>
            <person name="Kobayashi A."/>
            <person name="Larionov V."/>
            <person name="Leem S.-H."/>
            <person name="Lopez F."/>
            <person name="Lou Y."/>
            <person name="Lowry S."/>
            <person name="Malfatti S."/>
            <person name="Martinez D."/>
            <person name="McCready P.M."/>
            <person name="Medina C."/>
            <person name="Morgan J."/>
            <person name="Nelson K."/>
            <person name="Nolan M."/>
            <person name="Ovcharenko I."/>
            <person name="Pitluck S."/>
            <person name="Pollard M."/>
            <person name="Popkie A.P."/>
            <person name="Predki P."/>
            <person name="Quan G."/>
            <person name="Ramirez L."/>
            <person name="Rash S."/>
            <person name="Retterer J."/>
            <person name="Rodriguez A."/>
            <person name="Rogers S."/>
            <person name="Salamov A."/>
            <person name="Salazar A."/>
            <person name="She X."/>
            <person name="Smith D."/>
            <person name="Slezak T."/>
            <person name="Solovyev V."/>
            <person name="Thayer N."/>
            <person name="Tice H."/>
            <person name="Tsai M."/>
            <person name="Ustaszewska A."/>
            <person name="Vo N."/>
            <person name="Wagner M."/>
            <person name="Wheeler J."/>
            <person name="Wu K."/>
            <person name="Xie G."/>
            <person name="Yang J."/>
            <person name="Dubchak I."/>
            <person name="Furey T.S."/>
            <person name="DeJong P."/>
            <person name="Dickson M."/>
            <person name="Gordon D."/>
            <person name="Eichler E.E."/>
            <person name="Pennacchio L.A."/>
            <person name="Richardson P."/>
            <person name="Stubbs L."/>
            <person name="Rokhsar D.S."/>
            <person name="Myers R.M."/>
            <person name="Rubin E.M."/>
            <person name="Lucas S.M."/>
        </authorList>
    </citation>
    <scope>NUCLEOTIDE SEQUENCE [LARGE SCALE GENOMIC DNA]</scope>
</reference>
<dbReference type="EMBL" id="AC022098">
    <property type="status" value="NOT_ANNOTATED_CDS"/>
    <property type="molecule type" value="Genomic_DNA"/>
</dbReference>
<dbReference type="CCDS" id="CCDS59360.1"/>
<dbReference type="RefSeq" id="NP_001264307.1">
    <property type="nucleotide sequence ID" value="NM_001277378.2"/>
</dbReference>
<dbReference type="SMR" id="A6NJJ6"/>
<dbReference type="FunCoup" id="A6NJJ6">
    <property type="interactions" value="12"/>
</dbReference>
<dbReference type="STRING" id="9606.ENSP00000449137"/>
<dbReference type="iPTMnet" id="A6NJJ6"/>
<dbReference type="PhosphoSitePlus" id="A6NJJ6"/>
<dbReference type="BioMuta" id="C19orf67"/>
<dbReference type="PaxDb" id="9606-ENSP00000449137"/>
<dbReference type="ProteomicsDB" id="1341"/>
<dbReference type="Antibodypedia" id="67019">
    <property type="antibodies" value="23 antibodies from 7 providers"/>
</dbReference>
<dbReference type="DNASU" id="646457"/>
<dbReference type="Ensembl" id="ENST00000548523.6">
    <property type="protein sequence ID" value="ENSP00000449137.1"/>
    <property type="gene ID" value="ENSG00000188032.10"/>
</dbReference>
<dbReference type="Ensembl" id="ENST00000673482.1">
    <property type="protein sequence ID" value="ENSP00000500362.1"/>
    <property type="gene ID" value="ENSG00000288239.1"/>
</dbReference>
<dbReference type="GeneID" id="646457"/>
<dbReference type="KEGG" id="hsa:646457"/>
<dbReference type="MANE-Select" id="ENST00000548523.6">
    <property type="protein sequence ID" value="ENSP00000449137.1"/>
    <property type="RefSeq nucleotide sequence ID" value="NM_001277378.2"/>
    <property type="RefSeq protein sequence ID" value="NP_001264307.1"/>
</dbReference>
<dbReference type="UCSC" id="uc031rjr.2">
    <property type="organism name" value="human"/>
</dbReference>
<dbReference type="AGR" id="HGNC:34354"/>
<dbReference type="CTD" id="646457"/>
<dbReference type="GeneCards" id="C19orf67"/>
<dbReference type="HGNC" id="HGNC:34354">
    <property type="gene designation" value="C19orf67"/>
</dbReference>
<dbReference type="HPA" id="ENSG00000188032">
    <property type="expression patterns" value="Tissue enriched (testis)"/>
</dbReference>
<dbReference type="neXtProt" id="NX_A6NJJ6"/>
<dbReference type="OpenTargets" id="ENSG00000188032"/>
<dbReference type="VEuPathDB" id="HostDB:ENSG00000188032"/>
<dbReference type="eggNOG" id="ENOG502R1CJ">
    <property type="taxonomic scope" value="Eukaryota"/>
</dbReference>
<dbReference type="GeneTree" id="ENSGT00390000009916"/>
<dbReference type="InParanoid" id="A6NJJ6"/>
<dbReference type="OMA" id="WHLETIP"/>
<dbReference type="OrthoDB" id="9933945at2759"/>
<dbReference type="PAN-GO" id="A6NJJ6">
    <property type="GO annotations" value="0 GO annotations based on evolutionary models"/>
</dbReference>
<dbReference type="TreeFam" id="TF337776"/>
<dbReference type="PathwayCommons" id="A6NJJ6"/>
<dbReference type="SignaLink" id="A6NJJ6"/>
<dbReference type="BioGRID-ORCS" id="646457">
    <property type="hits" value="39 hits in 1111 CRISPR screens"/>
</dbReference>
<dbReference type="GenomeRNAi" id="646457"/>
<dbReference type="Pharos" id="A6NJJ6">
    <property type="development level" value="Tdark"/>
</dbReference>
<dbReference type="PRO" id="PR:A6NJJ6"/>
<dbReference type="Proteomes" id="UP000005640">
    <property type="component" value="Chromosome 19"/>
</dbReference>
<dbReference type="RNAct" id="A6NJJ6">
    <property type="molecule type" value="protein"/>
</dbReference>
<dbReference type="Bgee" id="ENSG00000188032">
    <property type="expression patterns" value="Expressed in male germ line stem cell (sensu Vertebrata) in testis and 59 other cell types or tissues"/>
</dbReference>
<dbReference type="ExpressionAtlas" id="A6NJJ6">
    <property type="expression patterns" value="baseline and differential"/>
</dbReference>
<dbReference type="InterPro" id="IPR021748">
    <property type="entry name" value="DUF3314"/>
</dbReference>
<dbReference type="PANTHER" id="PTHR36292">
    <property type="entry name" value="UPF0575 PROTEIN C19ORF67"/>
    <property type="match status" value="1"/>
</dbReference>
<dbReference type="PANTHER" id="PTHR36292:SF1">
    <property type="entry name" value="UPF0575 PROTEIN C19ORF67"/>
    <property type="match status" value="1"/>
</dbReference>
<dbReference type="Pfam" id="PF11771">
    <property type="entry name" value="DUF3314"/>
    <property type="match status" value="1"/>
</dbReference>
<proteinExistence type="inferred from homology"/>
<sequence>MATEQWFEGSLPLDPGETPPPDALEPGTPPCGDPSRSTPPGRPGNPSEPDPEDAEGRLAEARASTSSPKPLVPRPGPAPPRLSLDTLFSPITQQLRYLLKKADDFQSYLLYSRDQVQKEQLAKAMPTFLQMCEPYFLYLEAAARSIPPIYGPLQELVRKGLLEISQQLTLRLEQLVLMYASFGFVDLEEMNPLSISCFFCGRFSISLSHEVSIFRYCAPTAYTASRFPRYLYKKMRWHLEATPEAPGRGQDSLVDYYFLCYRDTWEDTGQSPANSCPQIQKLWSIGRWVPLGPAEDDLYSWILCPQPLGDYQQLLTIGFEEPTPTLATDLLVQILTGQAGQARPPSAAGPAGWAAQGS</sequence>
<name>CS067_HUMAN</name>
<protein>
    <recommendedName>
        <fullName>UPF0575 protein C19orf67</fullName>
    </recommendedName>
</protein>
<gene>
    <name type="primary">C19orf67</name>
</gene>
<feature type="chain" id="PRO_0000332937" description="UPF0575 protein C19orf67">
    <location>
        <begin position="1"/>
        <end position="358"/>
    </location>
</feature>
<feature type="region of interest" description="Disordered" evidence="1">
    <location>
        <begin position="1"/>
        <end position="84"/>
    </location>
</feature>
<feature type="compositionally biased region" description="Pro residues" evidence="1">
    <location>
        <begin position="17"/>
        <end position="32"/>
    </location>
</feature>
<feature type="compositionally biased region" description="Pro residues" evidence="1">
    <location>
        <begin position="70"/>
        <end position="80"/>
    </location>
</feature>
<evidence type="ECO:0000256" key="1">
    <source>
        <dbReference type="SAM" id="MobiDB-lite"/>
    </source>
</evidence>
<evidence type="ECO:0000305" key="2"/>
<accession>A6NJJ6</accession>